<feature type="chain" id="PRO_1000198875" description="Arginine--tRNA ligase">
    <location>
        <begin position="1"/>
        <end position="620"/>
    </location>
</feature>
<feature type="short sequence motif" description="'HIGH' region">
    <location>
        <begin position="147"/>
        <end position="157"/>
    </location>
</feature>
<sequence length="620" mass="67290">MSPEALSELISSIAHNLVAAGQAGTLTDDLIPPVDKLAVMRPKDRAHGDWASNIAMQLAKKAGMKPRDLAEPFAAALAEADGIAKVEVAGPGFINITLDSASAAAVVDTVLAAGAVTDTDKHLNKVNEYGRNAHLGGQTLNLEFVSANPTGPIHIGGTRWAAVGDAMARVLEANGAKVVREYYFNDHGEQINRFAKSLVAAWAEANNLGDAGYQTETPCDGYKGAYINEIAARVQAEAESDGVDLTALAHQDQGLNDDGEPLGEADTEVREEFRKRAVPMMFDEIQKSMKDFRVNFDVWFHENSLYADGKVDAAIEELKSRGDIFDKDGATWFESTKHGDDKDRVIIKSNGEFAYFAADIAYYWDKRHRAENPADVAIYMLGADHHGYIGRMMAMCAAFGDEPGKNMQILIGQLVNVMKDGKPVRMSKRAGNVVTIDDLVSVVGVDAARYSLARSDYNQNFDIDLALLASHTNDNPVYYVQYAHARSKNVDRNAAVAGISYEGADLALLDTEADGEVLAALAQFPSVLATAADDRQPHKVARYLEELAATYHKWYNVERVVPMVLTDPETRGDDEARKALEIAKNPEPARAAARLKLNDAVQQVIANGLDLLGVTAPEKM</sequence>
<keyword id="KW-0030">Aminoacyl-tRNA synthetase</keyword>
<keyword id="KW-0067">ATP-binding</keyword>
<keyword id="KW-0963">Cytoplasm</keyword>
<keyword id="KW-0436">Ligase</keyword>
<keyword id="KW-0547">Nucleotide-binding</keyword>
<keyword id="KW-0648">Protein biosynthesis</keyword>
<organism>
    <name type="scientific">Bifidobacterium longum subsp. infantis (strain ATCC 15697 / DSM 20088 / JCM 1222 / NCTC 11817 / S12)</name>
    <dbReference type="NCBI Taxonomy" id="391904"/>
    <lineage>
        <taxon>Bacteria</taxon>
        <taxon>Bacillati</taxon>
        <taxon>Actinomycetota</taxon>
        <taxon>Actinomycetes</taxon>
        <taxon>Bifidobacteriales</taxon>
        <taxon>Bifidobacteriaceae</taxon>
        <taxon>Bifidobacterium</taxon>
    </lineage>
</organism>
<reference key="1">
    <citation type="journal article" date="2008" name="Proc. Natl. Acad. Sci. U.S.A.">
        <title>The genome sequence of Bifidobacterium longum subsp. infantis reveals adaptations for milk utilization within the infant microbiome.</title>
        <authorList>
            <person name="Sela D.A."/>
            <person name="Chapman J."/>
            <person name="Adeuya A."/>
            <person name="Kim J.H."/>
            <person name="Chen F."/>
            <person name="Whitehead T.R."/>
            <person name="Lapidus A."/>
            <person name="Rokhsar D.S."/>
            <person name="Lebrilla C.B."/>
            <person name="German J.B."/>
            <person name="Price N.P."/>
            <person name="Richardson P.M."/>
            <person name="Mills D.A."/>
        </authorList>
    </citation>
    <scope>NUCLEOTIDE SEQUENCE [LARGE SCALE GENOMIC DNA]</scope>
    <source>
        <strain>ATCC 15697 / DSM 20088 / JCM 1222 / NCTC 11817 / S12</strain>
    </source>
</reference>
<reference key="2">
    <citation type="journal article" date="2011" name="Nature">
        <title>Bifidobacteria can protect from enteropathogenic infection through production of acetate.</title>
        <authorList>
            <person name="Fukuda S."/>
            <person name="Toh H."/>
            <person name="Hase K."/>
            <person name="Oshima K."/>
            <person name="Nakanishi Y."/>
            <person name="Yoshimura K."/>
            <person name="Tobe T."/>
            <person name="Clarke J.M."/>
            <person name="Topping D.L."/>
            <person name="Suzuki T."/>
            <person name="Taylor T.D."/>
            <person name="Itoh K."/>
            <person name="Kikuchi J."/>
            <person name="Morita H."/>
            <person name="Hattori M."/>
            <person name="Ohno H."/>
        </authorList>
    </citation>
    <scope>NUCLEOTIDE SEQUENCE [LARGE SCALE GENOMIC DNA]</scope>
    <source>
        <strain>ATCC 15697 / DSM 20088 / JCM 1222 / NCTC 11817 / S12</strain>
    </source>
</reference>
<gene>
    <name evidence="1" type="primary">argS</name>
    <name type="ordered locus">Blon_2318</name>
    <name type="ordered locus">BLIJ_2393</name>
</gene>
<evidence type="ECO:0000255" key="1">
    <source>
        <dbReference type="HAMAP-Rule" id="MF_00123"/>
    </source>
</evidence>
<evidence type="ECO:0000305" key="2"/>
<accession>B7GNM0</accession>
<accession>E8MNV4</accession>
<protein>
    <recommendedName>
        <fullName evidence="1">Arginine--tRNA ligase</fullName>
        <ecNumber evidence="1">6.1.1.19</ecNumber>
    </recommendedName>
    <alternativeName>
        <fullName evidence="1">Arginyl-tRNA synthetase</fullName>
        <shortName evidence="1">ArgRS</shortName>
    </alternativeName>
</protein>
<proteinExistence type="inferred from homology"/>
<name>SYR_BIFLS</name>
<dbReference type="EC" id="6.1.1.19" evidence="1"/>
<dbReference type="EMBL" id="CP001095">
    <property type="protein sequence ID" value="ACJ53376.1"/>
    <property type="molecule type" value="Genomic_DNA"/>
</dbReference>
<dbReference type="EMBL" id="AP010889">
    <property type="protein sequence ID" value="BAJ69970.1"/>
    <property type="status" value="ALT_INIT"/>
    <property type="molecule type" value="Genomic_DNA"/>
</dbReference>
<dbReference type="RefSeq" id="WP_012578546.1">
    <property type="nucleotide sequence ID" value="NC_011593.1"/>
</dbReference>
<dbReference type="SMR" id="B7GNM0"/>
<dbReference type="KEGG" id="bln:Blon_2318"/>
<dbReference type="KEGG" id="blon:BLIJ_2393"/>
<dbReference type="PATRIC" id="fig|391904.8.peg.2394"/>
<dbReference type="HOGENOM" id="CLU_006406_0_1_11"/>
<dbReference type="Proteomes" id="UP000001360">
    <property type="component" value="Chromosome"/>
</dbReference>
<dbReference type="GO" id="GO:0005737">
    <property type="term" value="C:cytoplasm"/>
    <property type="evidence" value="ECO:0007669"/>
    <property type="project" value="UniProtKB-SubCell"/>
</dbReference>
<dbReference type="GO" id="GO:0004814">
    <property type="term" value="F:arginine-tRNA ligase activity"/>
    <property type="evidence" value="ECO:0007669"/>
    <property type="project" value="UniProtKB-UniRule"/>
</dbReference>
<dbReference type="GO" id="GO:0005524">
    <property type="term" value="F:ATP binding"/>
    <property type="evidence" value="ECO:0007669"/>
    <property type="project" value="UniProtKB-UniRule"/>
</dbReference>
<dbReference type="GO" id="GO:0006420">
    <property type="term" value="P:arginyl-tRNA aminoacylation"/>
    <property type="evidence" value="ECO:0007669"/>
    <property type="project" value="UniProtKB-UniRule"/>
</dbReference>
<dbReference type="CDD" id="cd00671">
    <property type="entry name" value="ArgRS_core"/>
    <property type="match status" value="1"/>
</dbReference>
<dbReference type="FunFam" id="3.40.50.620:FF:000062">
    <property type="entry name" value="Arginine--tRNA ligase"/>
    <property type="match status" value="1"/>
</dbReference>
<dbReference type="Gene3D" id="3.30.1360.70">
    <property type="entry name" value="Arginyl tRNA synthetase N-terminal domain"/>
    <property type="match status" value="1"/>
</dbReference>
<dbReference type="Gene3D" id="3.40.50.620">
    <property type="entry name" value="HUPs"/>
    <property type="match status" value="1"/>
</dbReference>
<dbReference type="Gene3D" id="1.10.730.10">
    <property type="entry name" value="Isoleucyl-tRNA Synthetase, Domain 1"/>
    <property type="match status" value="1"/>
</dbReference>
<dbReference type="HAMAP" id="MF_00123">
    <property type="entry name" value="Arg_tRNA_synth"/>
    <property type="match status" value="1"/>
</dbReference>
<dbReference type="InterPro" id="IPR001412">
    <property type="entry name" value="aa-tRNA-synth_I_CS"/>
</dbReference>
<dbReference type="InterPro" id="IPR001278">
    <property type="entry name" value="Arg-tRNA-ligase"/>
</dbReference>
<dbReference type="InterPro" id="IPR005148">
    <property type="entry name" value="Arg-tRNA-synth_N"/>
</dbReference>
<dbReference type="InterPro" id="IPR036695">
    <property type="entry name" value="Arg-tRNA-synth_N_sf"/>
</dbReference>
<dbReference type="InterPro" id="IPR035684">
    <property type="entry name" value="ArgRS_core"/>
</dbReference>
<dbReference type="InterPro" id="IPR008909">
    <property type="entry name" value="DALR_anticod-bd"/>
</dbReference>
<dbReference type="InterPro" id="IPR014729">
    <property type="entry name" value="Rossmann-like_a/b/a_fold"/>
</dbReference>
<dbReference type="InterPro" id="IPR009080">
    <property type="entry name" value="tRNAsynth_Ia_anticodon-bd"/>
</dbReference>
<dbReference type="NCBIfam" id="TIGR00456">
    <property type="entry name" value="argS"/>
    <property type="match status" value="1"/>
</dbReference>
<dbReference type="PANTHER" id="PTHR11956:SF5">
    <property type="entry name" value="ARGININE--TRNA LIGASE, CYTOPLASMIC"/>
    <property type="match status" value="1"/>
</dbReference>
<dbReference type="PANTHER" id="PTHR11956">
    <property type="entry name" value="ARGINYL-TRNA SYNTHETASE"/>
    <property type="match status" value="1"/>
</dbReference>
<dbReference type="Pfam" id="PF03485">
    <property type="entry name" value="Arg_tRNA_synt_N"/>
    <property type="match status" value="1"/>
</dbReference>
<dbReference type="Pfam" id="PF05746">
    <property type="entry name" value="DALR_1"/>
    <property type="match status" value="1"/>
</dbReference>
<dbReference type="Pfam" id="PF00750">
    <property type="entry name" value="tRNA-synt_1d"/>
    <property type="match status" value="1"/>
</dbReference>
<dbReference type="PRINTS" id="PR01038">
    <property type="entry name" value="TRNASYNTHARG"/>
</dbReference>
<dbReference type="SMART" id="SM01016">
    <property type="entry name" value="Arg_tRNA_synt_N"/>
    <property type="match status" value="1"/>
</dbReference>
<dbReference type="SMART" id="SM00836">
    <property type="entry name" value="DALR_1"/>
    <property type="match status" value="1"/>
</dbReference>
<dbReference type="SUPFAM" id="SSF47323">
    <property type="entry name" value="Anticodon-binding domain of a subclass of class I aminoacyl-tRNA synthetases"/>
    <property type="match status" value="1"/>
</dbReference>
<dbReference type="SUPFAM" id="SSF55190">
    <property type="entry name" value="Arginyl-tRNA synthetase (ArgRS), N-terminal 'additional' domain"/>
    <property type="match status" value="1"/>
</dbReference>
<dbReference type="SUPFAM" id="SSF52374">
    <property type="entry name" value="Nucleotidylyl transferase"/>
    <property type="match status" value="1"/>
</dbReference>
<dbReference type="PROSITE" id="PS00178">
    <property type="entry name" value="AA_TRNA_LIGASE_I"/>
    <property type="match status" value="1"/>
</dbReference>
<comment type="catalytic activity">
    <reaction evidence="1">
        <text>tRNA(Arg) + L-arginine + ATP = L-arginyl-tRNA(Arg) + AMP + diphosphate</text>
        <dbReference type="Rhea" id="RHEA:20301"/>
        <dbReference type="Rhea" id="RHEA-COMP:9658"/>
        <dbReference type="Rhea" id="RHEA-COMP:9673"/>
        <dbReference type="ChEBI" id="CHEBI:30616"/>
        <dbReference type="ChEBI" id="CHEBI:32682"/>
        <dbReference type="ChEBI" id="CHEBI:33019"/>
        <dbReference type="ChEBI" id="CHEBI:78442"/>
        <dbReference type="ChEBI" id="CHEBI:78513"/>
        <dbReference type="ChEBI" id="CHEBI:456215"/>
        <dbReference type="EC" id="6.1.1.19"/>
    </reaction>
</comment>
<comment type="subunit">
    <text evidence="1">Monomer.</text>
</comment>
<comment type="subcellular location">
    <subcellularLocation>
        <location evidence="1">Cytoplasm</location>
    </subcellularLocation>
</comment>
<comment type="similarity">
    <text evidence="1">Belongs to the class-I aminoacyl-tRNA synthetase family.</text>
</comment>
<comment type="sequence caution" evidence="2">
    <conflict type="erroneous initiation">
        <sequence resource="EMBL-CDS" id="BAJ69970"/>
    </conflict>
    <text>Extended N-terminus.</text>
</comment>